<accession>P9WHW6</accession>
<accession>L0TGX6</accession>
<accession>Q79F90</accession>
<accession>Q7D4N4</accession>
<gene>
    <name type="primary">PPE69</name>
    <name type="ordered locus">MT4007</name>
</gene>
<comment type="similarity">
    <text evidence="2">Belongs to the mycobacterial PPE family.</text>
</comment>
<proteinExistence type="inferred from homology"/>
<dbReference type="EMBL" id="AE000516">
    <property type="protein sequence ID" value="AAK48374.1"/>
    <property type="molecule type" value="Genomic_DNA"/>
</dbReference>
<dbReference type="PIR" id="E70598">
    <property type="entry name" value="E70598"/>
</dbReference>
<dbReference type="RefSeq" id="WP_010924733.1">
    <property type="nucleotide sequence ID" value="NC_002755.2"/>
</dbReference>
<dbReference type="SMR" id="P9WHW6"/>
<dbReference type="KEGG" id="mtc:MT4007"/>
<dbReference type="HOGENOM" id="CLU_058408_0_0_11"/>
<dbReference type="Proteomes" id="UP000001020">
    <property type="component" value="Chromosome"/>
</dbReference>
<dbReference type="Gene3D" id="1.20.1260.20">
    <property type="entry name" value="PPE superfamily"/>
    <property type="match status" value="1"/>
</dbReference>
<dbReference type="InterPro" id="IPR000030">
    <property type="entry name" value="PPE_dom"/>
</dbReference>
<dbReference type="InterPro" id="IPR038332">
    <property type="entry name" value="PPE_sf"/>
</dbReference>
<dbReference type="Pfam" id="PF00823">
    <property type="entry name" value="PPE"/>
    <property type="match status" value="1"/>
</dbReference>
<dbReference type="SUPFAM" id="SSF140459">
    <property type="entry name" value="PE/PPE dimer-like"/>
    <property type="match status" value="1"/>
</dbReference>
<sequence>MPDPGWAARTPEANDLLLKAGTGVGTHLANQTAWTTLGASHHASGVASAINTAATAASWLGVGSAASALNVTMLNATLHGLAGWVDVKPAVVSTAIAAFETANAAMRPAPECMVNRDEWGVDNAINPSVLWTLTPRIVSLDVEYFGVMWPNNAAVGATYGGVLAALAESLAIPPPVATMGASPAAPAQAAAAVGQAAAEAAAGCGMRSAYQGVQAGSTGAGQSTSAGENFGNQLSTFMQPMQAVMQAAPQALQAPSGLMQAPMSAMQPLQSMVGMFANPGALGMGGAAPGASAASAAGGISAAATEVGAGGGGAALGGGGMPATSFTRPVSAFESGTSGRPVGLRPSGALGADVVRAPTTTVGGTPIGGMPVGHAAGGHRGSHGKSEQAATVRVVDDRR</sequence>
<organism>
    <name type="scientific">Mycobacterium tuberculosis (strain CDC 1551 / Oshkosh)</name>
    <dbReference type="NCBI Taxonomy" id="83331"/>
    <lineage>
        <taxon>Bacteria</taxon>
        <taxon>Bacillati</taxon>
        <taxon>Actinomycetota</taxon>
        <taxon>Actinomycetes</taxon>
        <taxon>Mycobacteriales</taxon>
        <taxon>Mycobacteriaceae</taxon>
        <taxon>Mycobacterium</taxon>
        <taxon>Mycobacterium tuberculosis complex</taxon>
    </lineage>
</organism>
<name>PPE69_MYCTO</name>
<keyword id="KW-1185">Reference proteome</keyword>
<protein>
    <recommendedName>
        <fullName>Uncharacterized PPE family protein PPE69</fullName>
    </recommendedName>
</protein>
<reference key="1">
    <citation type="journal article" date="2002" name="J. Bacteriol.">
        <title>Whole-genome comparison of Mycobacterium tuberculosis clinical and laboratory strains.</title>
        <authorList>
            <person name="Fleischmann R.D."/>
            <person name="Alland D."/>
            <person name="Eisen J.A."/>
            <person name="Carpenter L."/>
            <person name="White O."/>
            <person name="Peterson J.D."/>
            <person name="DeBoy R.T."/>
            <person name="Dodson R.J."/>
            <person name="Gwinn M.L."/>
            <person name="Haft D.H."/>
            <person name="Hickey E.K."/>
            <person name="Kolonay J.F."/>
            <person name="Nelson W.C."/>
            <person name="Umayam L.A."/>
            <person name="Ermolaeva M.D."/>
            <person name="Salzberg S.L."/>
            <person name="Delcher A."/>
            <person name="Utterback T.R."/>
            <person name="Weidman J.F."/>
            <person name="Khouri H.M."/>
            <person name="Gill J."/>
            <person name="Mikula A."/>
            <person name="Bishai W."/>
            <person name="Jacobs W.R. Jr."/>
            <person name="Venter J.C."/>
            <person name="Fraser C.M."/>
        </authorList>
    </citation>
    <scope>NUCLEOTIDE SEQUENCE [LARGE SCALE GENOMIC DNA]</scope>
    <source>
        <strain>CDC 1551 / Oshkosh</strain>
    </source>
</reference>
<evidence type="ECO:0000256" key="1">
    <source>
        <dbReference type="SAM" id="MobiDB-lite"/>
    </source>
</evidence>
<evidence type="ECO:0000305" key="2"/>
<feature type="chain" id="PRO_0000428110" description="Uncharacterized PPE family protein PPE69">
    <location>
        <begin position="1"/>
        <end position="399"/>
    </location>
</feature>
<feature type="region of interest" description="Disordered" evidence="1">
    <location>
        <begin position="375"/>
        <end position="399"/>
    </location>
</feature>